<reference key="1">
    <citation type="journal article" date="1997" name="Microbiology">
        <title>Analysis of the Bacillus subtilis genome: cloning and nucleotide sequence of a 62 kb region between 275 degrees (rrnB) and 284 degrees (pai).</title>
        <authorList>
            <person name="Oudega B."/>
            <person name="Koningstein G."/>
            <person name="Rodrigues L."/>
            <person name="de Sales Ramon M."/>
            <person name="Hilbert H."/>
            <person name="Duesterhoeft A."/>
            <person name="Pohl T.M."/>
            <person name="Weitzenegger T."/>
        </authorList>
    </citation>
    <scope>NUCLEOTIDE SEQUENCE [GENOMIC DNA]</scope>
    <source>
        <strain>168</strain>
    </source>
</reference>
<reference key="2">
    <citation type="journal article" date="1997" name="Nature">
        <title>The complete genome sequence of the Gram-positive bacterium Bacillus subtilis.</title>
        <authorList>
            <person name="Kunst F."/>
            <person name="Ogasawara N."/>
            <person name="Moszer I."/>
            <person name="Albertini A.M."/>
            <person name="Alloni G."/>
            <person name="Azevedo V."/>
            <person name="Bertero M.G."/>
            <person name="Bessieres P."/>
            <person name="Bolotin A."/>
            <person name="Borchert S."/>
            <person name="Borriss R."/>
            <person name="Boursier L."/>
            <person name="Brans A."/>
            <person name="Braun M."/>
            <person name="Brignell S.C."/>
            <person name="Bron S."/>
            <person name="Brouillet S."/>
            <person name="Bruschi C.V."/>
            <person name="Caldwell B."/>
            <person name="Capuano V."/>
            <person name="Carter N.M."/>
            <person name="Choi S.-K."/>
            <person name="Codani J.-J."/>
            <person name="Connerton I.F."/>
            <person name="Cummings N.J."/>
            <person name="Daniel R.A."/>
            <person name="Denizot F."/>
            <person name="Devine K.M."/>
            <person name="Duesterhoeft A."/>
            <person name="Ehrlich S.D."/>
            <person name="Emmerson P.T."/>
            <person name="Entian K.-D."/>
            <person name="Errington J."/>
            <person name="Fabret C."/>
            <person name="Ferrari E."/>
            <person name="Foulger D."/>
            <person name="Fritz C."/>
            <person name="Fujita M."/>
            <person name="Fujita Y."/>
            <person name="Fuma S."/>
            <person name="Galizzi A."/>
            <person name="Galleron N."/>
            <person name="Ghim S.-Y."/>
            <person name="Glaser P."/>
            <person name="Goffeau A."/>
            <person name="Golightly E.J."/>
            <person name="Grandi G."/>
            <person name="Guiseppi G."/>
            <person name="Guy B.J."/>
            <person name="Haga K."/>
            <person name="Haiech J."/>
            <person name="Harwood C.R."/>
            <person name="Henaut A."/>
            <person name="Hilbert H."/>
            <person name="Holsappel S."/>
            <person name="Hosono S."/>
            <person name="Hullo M.-F."/>
            <person name="Itaya M."/>
            <person name="Jones L.-M."/>
            <person name="Joris B."/>
            <person name="Karamata D."/>
            <person name="Kasahara Y."/>
            <person name="Klaerr-Blanchard M."/>
            <person name="Klein C."/>
            <person name="Kobayashi Y."/>
            <person name="Koetter P."/>
            <person name="Koningstein G."/>
            <person name="Krogh S."/>
            <person name="Kumano M."/>
            <person name="Kurita K."/>
            <person name="Lapidus A."/>
            <person name="Lardinois S."/>
            <person name="Lauber J."/>
            <person name="Lazarevic V."/>
            <person name="Lee S.-M."/>
            <person name="Levine A."/>
            <person name="Liu H."/>
            <person name="Masuda S."/>
            <person name="Mauel C."/>
            <person name="Medigue C."/>
            <person name="Medina N."/>
            <person name="Mellado R.P."/>
            <person name="Mizuno M."/>
            <person name="Moestl D."/>
            <person name="Nakai S."/>
            <person name="Noback M."/>
            <person name="Noone D."/>
            <person name="O'Reilly M."/>
            <person name="Ogawa K."/>
            <person name="Ogiwara A."/>
            <person name="Oudega B."/>
            <person name="Park S.-H."/>
            <person name="Parro V."/>
            <person name="Pohl T.M."/>
            <person name="Portetelle D."/>
            <person name="Porwollik S."/>
            <person name="Prescott A.M."/>
            <person name="Presecan E."/>
            <person name="Pujic P."/>
            <person name="Purnelle B."/>
            <person name="Rapoport G."/>
            <person name="Rey M."/>
            <person name="Reynolds S."/>
            <person name="Rieger M."/>
            <person name="Rivolta C."/>
            <person name="Rocha E."/>
            <person name="Roche B."/>
            <person name="Rose M."/>
            <person name="Sadaie Y."/>
            <person name="Sato T."/>
            <person name="Scanlan E."/>
            <person name="Schleich S."/>
            <person name="Schroeter R."/>
            <person name="Scoffone F."/>
            <person name="Sekiguchi J."/>
            <person name="Sekowska A."/>
            <person name="Seror S.J."/>
            <person name="Serror P."/>
            <person name="Shin B.-S."/>
            <person name="Soldo B."/>
            <person name="Sorokin A."/>
            <person name="Tacconi E."/>
            <person name="Takagi T."/>
            <person name="Takahashi H."/>
            <person name="Takemaru K."/>
            <person name="Takeuchi M."/>
            <person name="Tamakoshi A."/>
            <person name="Tanaka T."/>
            <person name="Terpstra P."/>
            <person name="Tognoni A."/>
            <person name="Tosato V."/>
            <person name="Uchiyama S."/>
            <person name="Vandenbol M."/>
            <person name="Vannier F."/>
            <person name="Vassarotti A."/>
            <person name="Viari A."/>
            <person name="Wambutt R."/>
            <person name="Wedler E."/>
            <person name="Wedler H."/>
            <person name="Weitzenegger T."/>
            <person name="Winters P."/>
            <person name="Wipat A."/>
            <person name="Yamamoto H."/>
            <person name="Yamane K."/>
            <person name="Yasumoto K."/>
            <person name="Yata K."/>
            <person name="Yoshida K."/>
            <person name="Yoshikawa H.-F."/>
            <person name="Zumstein E."/>
            <person name="Yoshikawa H."/>
            <person name="Danchin A."/>
        </authorList>
    </citation>
    <scope>NUCLEOTIDE SEQUENCE [LARGE SCALE GENOMIC DNA]</scope>
    <source>
        <strain>168</strain>
    </source>
</reference>
<reference key="3">
    <citation type="journal article" date="2009" name="Microbiology">
        <title>From a consortium sequence to a unified sequence: the Bacillus subtilis 168 reference genome a decade later.</title>
        <authorList>
            <person name="Barbe V."/>
            <person name="Cruveiller S."/>
            <person name="Kunst F."/>
            <person name="Lenoble P."/>
            <person name="Meurice G."/>
            <person name="Sekowska A."/>
            <person name="Vallenet D."/>
            <person name="Wang T."/>
            <person name="Moszer I."/>
            <person name="Medigue C."/>
            <person name="Danchin A."/>
        </authorList>
    </citation>
    <scope>SEQUENCE REVISION TO 86; 90; 99 AND 104</scope>
</reference>
<reference key="4">
    <citation type="journal article" date="1999" name="J. Bacteriol.">
        <title>mrp, a multigene, multifunctional locus in Bacillus subtilis with roles in resistance to cholate and to Na+ and in pH homeostasis.</title>
        <authorList>
            <person name="Ito M."/>
            <person name="Guffanti A.A."/>
            <person name="Oudega B."/>
            <person name="Krulwich T.A."/>
        </authorList>
    </citation>
    <scope>FUNCTION</scope>
</reference>
<reference key="5">
    <citation type="journal article" date="2001" name="FEBS Lett.">
        <title>Mrp-dependent Na(+)/H(+) antiporters of Bacillus exhibit characteristics that are unanticipated for completely secondary active transporters.</title>
        <authorList>
            <person name="Ito M."/>
            <person name="Guffanti A.A."/>
            <person name="Krulwich T.A."/>
        </authorList>
    </citation>
    <scope>COUPLING ENERGIZATION MODE</scope>
</reference>
<reference key="6">
    <citation type="journal article" date="2007" name="J. Bacteriol.">
        <title>Catalytic properties of Staphylococcus aureus and Bacillus members of the secondary cation/proton antiporter-3 (Mrp) family are revealed by an optimized assay in an Escherichia coli host.</title>
        <authorList>
            <person name="Swartz T.H."/>
            <person name="Ito M."/>
            <person name="Ohira T."/>
            <person name="Natsui S."/>
            <person name="Hicks D.B."/>
            <person name="Krulwich T.A."/>
        </authorList>
    </citation>
    <scope>FUNCTION IN ANTIPORT OF LITHIUM</scope>
</reference>
<reference key="7">
    <citation type="journal article" date="2007" name="J. Bacteriol.">
        <title>Complex formation by the mrpABCDEFG gene products, which constitute a principal Na+/H+ antiporter in Bacillus subtilis.</title>
        <authorList>
            <person name="Kajiyama Y."/>
            <person name="Otagiri M."/>
            <person name="Sekiguchi J."/>
            <person name="Kosono S."/>
            <person name="Kudo T."/>
        </authorList>
    </citation>
    <scope>SUBUNIT</scope>
    <source>
        <strain>168 / Marburg / UOT1285</strain>
    </source>
</reference>
<name>MRPC_BACSU</name>
<protein>
    <recommendedName>
        <fullName>Na(+)/H(+) antiporter subunit C</fullName>
    </recommendedName>
    <alternativeName>
        <fullName>Mrp complex subunit C</fullName>
    </alternativeName>
    <alternativeName>
        <fullName>Multiple resistance and pH homeostasis protein C</fullName>
    </alternativeName>
</protein>
<dbReference type="EMBL" id="Z93937">
    <property type="protein sequence ID" value="CAB07944.1"/>
    <property type="molecule type" value="Genomic_DNA"/>
</dbReference>
<dbReference type="EMBL" id="AL009126">
    <property type="protein sequence ID" value="CAB15151.2"/>
    <property type="molecule type" value="Genomic_DNA"/>
</dbReference>
<dbReference type="PIR" id="C70010">
    <property type="entry name" value="C70010"/>
</dbReference>
<dbReference type="RefSeq" id="NP_391040.2">
    <property type="nucleotide sequence ID" value="NC_000964.3"/>
</dbReference>
<dbReference type="RefSeq" id="WP_003220730.1">
    <property type="nucleotide sequence ID" value="NZ_OZ025638.1"/>
</dbReference>
<dbReference type="SMR" id="O05260"/>
<dbReference type="FunCoup" id="O05260">
    <property type="interactions" value="29"/>
</dbReference>
<dbReference type="STRING" id="224308.BSU31620"/>
<dbReference type="TCDB" id="2.A.63.1.4">
    <property type="family name" value="the monovalent cation (k(+) or na(+)):proton antiporter-3 (cpa3) family"/>
</dbReference>
<dbReference type="PaxDb" id="224308-BSU31620"/>
<dbReference type="EnsemblBacteria" id="CAB15151">
    <property type="protein sequence ID" value="CAB15151"/>
    <property type="gene ID" value="BSU_31620"/>
</dbReference>
<dbReference type="GeneID" id="937139"/>
<dbReference type="KEGG" id="bsu:BSU31620"/>
<dbReference type="PATRIC" id="fig|224308.179.peg.3427"/>
<dbReference type="eggNOG" id="COG1006">
    <property type="taxonomic scope" value="Bacteria"/>
</dbReference>
<dbReference type="InParanoid" id="O05260"/>
<dbReference type="OrthoDB" id="9799219at2"/>
<dbReference type="PhylomeDB" id="O05260"/>
<dbReference type="BioCyc" id="BSUB:BSU31620-MONOMER"/>
<dbReference type="PRO" id="PR:O05260"/>
<dbReference type="Proteomes" id="UP000001570">
    <property type="component" value="Chromosome"/>
</dbReference>
<dbReference type="GO" id="GO:0005886">
    <property type="term" value="C:plasma membrane"/>
    <property type="evidence" value="ECO:0007669"/>
    <property type="project" value="UniProtKB-SubCell"/>
</dbReference>
<dbReference type="GO" id="GO:0015385">
    <property type="term" value="F:sodium:proton antiporter activity"/>
    <property type="evidence" value="ECO:0000318"/>
    <property type="project" value="GO_Central"/>
</dbReference>
<dbReference type="GO" id="GO:0035725">
    <property type="term" value="P:sodium ion transmembrane transport"/>
    <property type="evidence" value="ECO:0000318"/>
    <property type="project" value="GO_Central"/>
</dbReference>
<dbReference type="Gene3D" id="1.10.287.3510">
    <property type="match status" value="1"/>
</dbReference>
<dbReference type="InterPro" id="IPR050601">
    <property type="entry name" value="CPA3_antiporter_subunitC"/>
</dbReference>
<dbReference type="InterPro" id="IPR039428">
    <property type="entry name" value="NUOK/Mnh_C1-like"/>
</dbReference>
<dbReference type="NCBIfam" id="NF006372">
    <property type="entry name" value="PRK08600.1"/>
    <property type="match status" value="1"/>
</dbReference>
<dbReference type="NCBIfam" id="NF009303">
    <property type="entry name" value="PRK12660.1"/>
    <property type="match status" value="1"/>
</dbReference>
<dbReference type="PANTHER" id="PTHR34583">
    <property type="entry name" value="ANTIPORTER SUBUNIT MNHC2-RELATED"/>
    <property type="match status" value="1"/>
</dbReference>
<dbReference type="PANTHER" id="PTHR34583:SF2">
    <property type="entry name" value="ANTIPORTER SUBUNIT MNHC2-RELATED"/>
    <property type="match status" value="1"/>
</dbReference>
<dbReference type="Pfam" id="PF00420">
    <property type="entry name" value="Oxidored_q2"/>
    <property type="match status" value="1"/>
</dbReference>
<organism>
    <name type="scientific">Bacillus subtilis (strain 168)</name>
    <dbReference type="NCBI Taxonomy" id="224308"/>
    <lineage>
        <taxon>Bacteria</taxon>
        <taxon>Bacillati</taxon>
        <taxon>Bacillota</taxon>
        <taxon>Bacilli</taxon>
        <taxon>Bacillales</taxon>
        <taxon>Bacillaceae</taxon>
        <taxon>Bacillus</taxon>
    </lineage>
</organism>
<comment type="function">
    <text evidence="2 3">Mrp complex is a Na(+)/H(+) antiporter that is considered to be the major Na(+) excretion system in B.subtilis. Has a major role in Na(+) resistance and a minor role in Na(+)- and K(+)-dependent pH homeostasis as compared to TetB. MrpA may be the actual Na(+)/H(+) antiporter, although the six other Mrp proteins are all required for Na(+)/H(+) antiport activity and Na(+) resistance. MrpA is required for initiation of sporulation when external Na(+) concentration increases. Also transports Li(+) but not K(+), Ca(2+) or Mg(2+).</text>
</comment>
<comment type="subunit">
    <text evidence="4">Forms a heterooligomeric complex that consists of seven subunits: MrpA, MrpB, MrpC, MrpD, MrpE, MrpF and MrpG.</text>
</comment>
<comment type="subcellular location">
    <subcellularLocation>
        <location evidence="5">Cell membrane</location>
        <topology evidence="5">Multi-pass membrane protein</topology>
    </subcellularLocation>
</comment>
<comment type="miscellaneous">
    <text>Mrp-dependent antiport apparently occurs by a secondary, proton motive force-dependent mechanism, but the similarity of several Mrp proteins to membrane-embedded subunits of energy-coupled NADH dehydrogenase complexes raises the possibility that there is a capacity for electron transport that could provide a primary energy coupling option for Mrp functions.</text>
</comment>
<comment type="similarity">
    <text evidence="5">Belongs to the CPA3 antiporters (TC 2.A.63) subunit C family.</text>
</comment>
<evidence type="ECO:0000255" key="1"/>
<evidence type="ECO:0000269" key="2">
    <source>
    </source>
</evidence>
<evidence type="ECO:0000269" key="3">
    <source>
    </source>
</evidence>
<evidence type="ECO:0000269" key="4">
    <source>
    </source>
</evidence>
<evidence type="ECO:0000305" key="5"/>
<gene>
    <name type="primary">mrpC</name>
    <name type="synonym">yufV</name>
    <name type="ordered locus">BSU31620</name>
</gene>
<sequence>MEILMAVLAGIIFMAATYLLLSKSLLRVIIGTALLSHGVHLMLLTMGGLKKGAAPILSEHAKSFVDPLPQALILTAIVISFGVTSFILVMAFRAYQELKSDDMDQMRGNDQHE</sequence>
<feature type="chain" id="PRO_0000089155" description="Na(+)/H(+) antiporter subunit C">
    <location>
        <begin position="1"/>
        <end position="113"/>
    </location>
</feature>
<feature type="transmembrane region" description="Helical" evidence="1">
    <location>
        <begin position="4"/>
        <end position="21"/>
    </location>
</feature>
<feature type="transmembrane region" description="Helical" evidence="1">
    <location>
        <begin position="28"/>
        <end position="47"/>
    </location>
</feature>
<feature type="transmembrane region" description="Helical" evidence="1">
    <location>
        <begin position="67"/>
        <end position="89"/>
    </location>
</feature>
<feature type="sequence conflict" description="In Ref. 1; CAB07944." evidence="5" ref="1">
    <original>F</original>
    <variation>C</variation>
    <location>
        <position position="86"/>
    </location>
</feature>
<feature type="sequence conflict" description="In Ref. 1; CAB07944." evidence="5" ref="1">
    <original>M</original>
    <variation>K</variation>
    <location>
        <position position="90"/>
    </location>
</feature>
<feature type="sequence conflict" description="In Ref. 1; CAB07944." evidence="5" ref="1">
    <original>K</original>
    <variation>E</variation>
    <location>
        <position position="99"/>
    </location>
</feature>
<feature type="sequence conflict" description="In Ref. 1; CAB07944." evidence="5" ref="1">
    <original>D</original>
    <variation>G</variation>
    <location>
        <position position="104"/>
    </location>
</feature>
<keyword id="KW-0050">Antiport</keyword>
<keyword id="KW-1003">Cell membrane</keyword>
<keyword id="KW-0375">Hydrogen ion transport</keyword>
<keyword id="KW-0406">Ion transport</keyword>
<keyword id="KW-0472">Membrane</keyword>
<keyword id="KW-1185">Reference proteome</keyword>
<keyword id="KW-0915">Sodium</keyword>
<keyword id="KW-0739">Sodium transport</keyword>
<keyword id="KW-0812">Transmembrane</keyword>
<keyword id="KW-1133">Transmembrane helix</keyword>
<keyword id="KW-0813">Transport</keyword>
<accession>O05260</accession>
<proteinExistence type="evidence at protein level"/>